<geneLocation type="chloroplast"/>
<feature type="chain" id="PRO_0000359139" description="Acetyl-coenzyme A carboxylase carboxyl transferase subunit beta, chloroplastic">
    <location>
        <begin position="1"/>
        <end position="466"/>
    </location>
</feature>
<feature type="domain" description="CoA carboxyltransferase N-terminal" evidence="3">
    <location>
        <begin position="198"/>
        <end position="466"/>
    </location>
</feature>
<feature type="zinc finger region" description="C4-type" evidence="2">
    <location>
        <begin position="202"/>
        <end position="224"/>
    </location>
</feature>
<feature type="binding site" evidence="2">
    <location>
        <position position="202"/>
    </location>
    <ligand>
        <name>Zn(2+)</name>
        <dbReference type="ChEBI" id="CHEBI:29105"/>
    </ligand>
</feature>
<feature type="binding site" evidence="2">
    <location>
        <position position="205"/>
    </location>
    <ligand>
        <name>Zn(2+)</name>
        <dbReference type="ChEBI" id="CHEBI:29105"/>
    </ligand>
</feature>
<feature type="binding site" evidence="2">
    <location>
        <position position="221"/>
    </location>
    <ligand>
        <name>Zn(2+)</name>
        <dbReference type="ChEBI" id="CHEBI:29105"/>
    </ligand>
</feature>
<feature type="binding site" evidence="2">
    <location>
        <position position="224"/>
    </location>
    <ligand>
        <name>Zn(2+)</name>
        <dbReference type="ChEBI" id="CHEBI:29105"/>
    </ligand>
</feature>
<evidence type="ECO:0000250" key="1"/>
<evidence type="ECO:0000255" key="2">
    <source>
        <dbReference type="HAMAP-Rule" id="MF_01395"/>
    </source>
</evidence>
<evidence type="ECO:0000255" key="3">
    <source>
        <dbReference type="PROSITE-ProRule" id="PRU01136"/>
    </source>
</evidence>
<organism>
    <name type="scientific">Fagopyrum esculentum subsp. ancestrale</name>
    <name type="common">Wild buckwheat</name>
    <dbReference type="NCBI Taxonomy" id="180217"/>
    <lineage>
        <taxon>Eukaryota</taxon>
        <taxon>Viridiplantae</taxon>
        <taxon>Streptophyta</taxon>
        <taxon>Embryophyta</taxon>
        <taxon>Tracheophyta</taxon>
        <taxon>Spermatophyta</taxon>
        <taxon>Magnoliopsida</taxon>
        <taxon>eudicotyledons</taxon>
        <taxon>Gunneridae</taxon>
        <taxon>Pentapetalae</taxon>
        <taxon>Caryophyllales</taxon>
        <taxon>Polygonaceae</taxon>
        <taxon>Polygonoideae</taxon>
        <taxon>Fagopyreae</taxon>
        <taxon>Fagopyrum</taxon>
    </lineage>
</organism>
<gene>
    <name evidence="2" type="primary">accD</name>
</gene>
<protein>
    <recommendedName>
        <fullName evidence="2">Acetyl-coenzyme A carboxylase carboxyl transferase subunit beta, chloroplastic</fullName>
        <shortName evidence="2">ACCase subunit beta</shortName>
        <shortName evidence="2">Acetyl-CoA carboxylase carboxyltransferase subunit beta</shortName>
        <ecNumber evidence="2">2.1.3.15</ecNumber>
    </recommendedName>
</protein>
<proteinExistence type="inferred from homology"/>
<dbReference type="EC" id="2.1.3.15" evidence="2"/>
<dbReference type="EMBL" id="EU254477">
    <property type="protein sequence ID" value="ABY79741.1"/>
    <property type="molecule type" value="Genomic_DNA"/>
</dbReference>
<dbReference type="RefSeq" id="YP_001936526.1">
    <property type="nucleotide sequence ID" value="NC_010776.1"/>
</dbReference>
<dbReference type="SMR" id="B2XWL4"/>
<dbReference type="GeneID" id="6336050"/>
<dbReference type="UniPathway" id="UPA00655">
    <property type="reaction ID" value="UER00711"/>
</dbReference>
<dbReference type="GO" id="GO:0009317">
    <property type="term" value="C:acetyl-CoA carboxylase complex"/>
    <property type="evidence" value="ECO:0007669"/>
    <property type="project" value="InterPro"/>
</dbReference>
<dbReference type="GO" id="GO:0009570">
    <property type="term" value="C:chloroplast stroma"/>
    <property type="evidence" value="ECO:0007669"/>
    <property type="project" value="UniProtKB-SubCell"/>
</dbReference>
<dbReference type="GO" id="GO:0003989">
    <property type="term" value="F:acetyl-CoA carboxylase activity"/>
    <property type="evidence" value="ECO:0007669"/>
    <property type="project" value="InterPro"/>
</dbReference>
<dbReference type="GO" id="GO:0005524">
    <property type="term" value="F:ATP binding"/>
    <property type="evidence" value="ECO:0007669"/>
    <property type="project" value="UniProtKB-KW"/>
</dbReference>
<dbReference type="GO" id="GO:0016743">
    <property type="term" value="F:carboxyl- or carbamoyltransferase activity"/>
    <property type="evidence" value="ECO:0007669"/>
    <property type="project" value="UniProtKB-UniRule"/>
</dbReference>
<dbReference type="GO" id="GO:0008270">
    <property type="term" value="F:zinc ion binding"/>
    <property type="evidence" value="ECO:0007669"/>
    <property type="project" value="UniProtKB-UniRule"/>
</dbReference>
<dbReference type="GO" id="GO:0006633">
    <property type="term" value="P:fatty acid biosynthetic process"/>
    <property type="evidence" value="ECO:0007669"/>
    <property type="project" value="UniProtKB-KW"/>
</dbReference>
<dbReference type="GO" id="GO:2001295">
    <property type="term" value="P:malonyl-CoA biosynthetic process"/>
    <property type="evidence" value="ECO:0007669"/>
    <property type="project" value="UniProtKB-UniRule"/>
</dbReference>
<dbReference type="Gene3D" id="3.90.226.10">
    <property type="entry name" value="2-enoyl-CoA Hydratase, Chain A, domain 1"/>
    <property type="match status" value="1"/>
</dbReference>
<dbReference type="HAMAP" id="MF_01395">
    <property type="entry name" value="AcetylCoA_CT_beta"/>
    <property type="match status" value="1"/>
</dbReference>
<dbReference type="InterPro" id="IPR034733">
    <property type="entry name" value="AcCoA_carboxyl_beta"/>
</dbReference>
<dbReference type="InterPro" id="IPR000438">
    <property type="entry name" value="Acetyl_CoA_COase_Trfase_b_su"/>
</dbReference>
<dbReference type="InterPro" id="IPR029045">
    <property type="entry name" value="ClpP/crotonase-like_dom_sf"/>
</dbReference>
<dbReference type="InterPro" id="IPR011762">
    <property type="entry name" value="COA_CT_N"/>
</dbReference>
<dbReference type="NCBIfam" id="TIGR00515">
    <property type="entry name" value="accD"/>
    <property type="match status" value="1"/>
</dbReference>
<dbReference type="PANTHER" id="PTHR42995">
    <property type="entry name" value="ACETYL-COENZYME A CARBOXYLASE CARBOXYL TRANSFERASE SUBUNIT BETA, CHLOROPLASTIC"/>
    <property type="match status" value="1"/>
</dbReference>
<dbReference type="PANTHER" id="PTHR42995:SF5">
    <property type="entry name" value="ACETYL-COENZYME A CARBOXYLASE CARBOXYL TRANSFERASE SUBUNIT BETA, CHLOROPLASTIC"/>
    <property type="match status" value="1"/>
</dbReference>
<dbReference type="Pfam" id="PF01039">
    <property type="entry name" value="Carboxyl_trans"/>
    <property type="match status" value="1"/>
</dbReference>
<dbReference type="PRINTS" id="PR01070">
    <property type="entry name" value="ACCCTRFRASEB"/>
</dbReference>
<dbReference type="SUPFAM" id="SSF52096">
    <property type="entry name" value="ClpP/crotonase"/>
    <property type="match status" value="1"/>
</dbReference>
<dbReference type="PROSITE" id="PS50980">
    <property type="entry name" value="COA_CT_NTER"/>
    <property type="match status" value="1"/>
</dbReference>
<keyword id="KW-0067">ATP-binding</keyword>
<keyword id="KW-0150">Chloroplast</keyword>
<keyword id="KW-0275">Fatty acid biosynthesis</keyword>
<keyword id="KW-0276">Fatty acid metabolism</keyword>
<keyword id="KW-0444">Lipid biosynthesis</keyword>
<keyword id="KW-0443">Lipid metabolism</keyword>
<keyword id="KW-0479">Metal-binding</keyword>
<keyword id="KW-0547">Nucleotide-binding</keyword>
<keyword id="KW-0934">Plastid</keyword>
<keyword id="KW-0808">Transferase</keyword>
<keyword id="KW-0862">Zinc</keyword>
<keyword id="KW-0863">Zinc-finger</keyword>
<comment type="function">
    <text evidence="2">Component of the acetyl coenzyme A carboxylase (ACC) complex. Biotin carboxylase (BC) catalyzes the carboxylation of biotin on its carrier protein (BCCP) and then the CO(2) group is transferred by the transcarboxylase to acetyl-CoA to form malonyl-CoA.</text>
</comment>
<comment type="catalytic activity">
    <reaction evidence="2">
        <text>N(6)-carboxybiotinyl-L-lysyl-[protein] + acetyl-CoA = N(6)-biotinyl-L-lysyl-[protein] + malonyl-CoA</text>
        <dbReference type="Rhea" id="RHEA:54728"/>
        <dbReference type="Rhea" id="RHEA-COMP:10505"/>
        <dbReference type="Rhea" id="RHEA-COMP:10506"/>
        <dbReference type="ChEBI" id="CHEBI:57288"/>
        <dbReference type="ChEBI" id="CHEBI:57384"/>
        <dbReference type="ChEBI" id="CHEBI:83144"/>
        <dbReference type="ChEBI" id="CHEBI:83145"/>
        <dbReference type="EC" id="2.1.3.15"/>
    </reaction>
</comment>
<comment type="cofactor">
    <cofactor evidence="2">
        <name>Zn(2+)</name>
        <dbReference type="ChEBI" id="CHEBI:29105"/>
    </cofactor>
    <text evidence="2">Binds 1 zinc ion per subunit.</text>
</comment>
<comment type="pathway">
    <text evidence="2">Lipid metabolism; malonyl-CoA biosynthesis; malonyl-CoA from acetyl-CoA: step 1/1.</text>
</comment>
<comment type="subunit">
    <text evidence="1">Acetyl-CoA carboxylase is a heterohexamer composed of biotin carboxyl carrier protein, biotin carboxylase and 2 subunits each of ACCase subunit alpha and ACCase plastid-coded subunit beta (accD).</text>
</comment>
<comment type="subcellular location">
    <subcellularLocation>
        <location evidence="2">Plastid</location>
        <location evidence="2">Chloroplast stroma</location>
    </subcellularLocation>
</comment>
<comment type="similarity">
    <text evidence="2">Belongs to the AccD/PCCB family.</text>
</comment>
<accession>B2XWL4</accession>
<name>ACCD_FAGEA</name>
<reference key="1">
    <citation type="journal article" date="2008" name="BMC Plant Biol.">
        <title>Comparative chloroplast genomics and phylogenetics of Fagopyrum esculentum ssp. ancestrale - a wild ancestor of cultivated buckwheat.</title>
        <authorList>
            <person name="Logacheva M.D."/>
            <person name="Samigullin T.H."/>
            <person name="Dhingra A."/>
            <person name="Penin A.A."/>
        </authorList>
    </citation>
    <scope>NUCLEOTIDE SEQUENCE [LARGE SCALE GENOMIC DNA]</scope>
</reference>
<sequence length="466" mass="52860">MEKWWFNSMLSKEELGHRCGLSKSMDSLDPIDNINSNENMILNFTEKSIHSWSNGSSYSNLDLLFIIGDIPNLISDETFLIRDRKGETYSVYFDIENKIVEIDNYHSFSNYWNSSYGTGSKSNDTHYDLYMYDTKSSLNNHINGCIDSYLHSQMRLDNYVLRDSDHYGDNYIFDDIKTTTKTNGRDKNLEVTKKYRNLWIQCENCYELNYKKLLKSKMRICDECGYHLKMSSSERIELSIDPGTWEPMDEDMVSTDPIEFHSQEEPYKDRINSYQKETGLTDAVQTGIGQLNGIPVAIGVMDFQFMGGSMGSVVGEKITRLAEYATNQNLPLIIVCASGGARMQEGSLSLMQMAKISSALFDYQSNKKLFYVSILTSPTTGGVTASFGMLGDIIISEPSAYIAFAGKRVIEETLNTTVPEGSQEAEYLFDKGLFDPIVPRNPLKGVLSELFRLHAFFPLNQNSIGQ</sequence>